<accession>P32924</accession>
<evidence type="ECO:0000250" key="1">
    <source>
        <dbReference type="UniProtKB" id="P68363"/>
    </source>
</evidence>
<evidence type="ECO:0000250" key="2">
    <source>
        <dbReference type="UniProtKB" id="Q13509"/>
    </source>
</evidence>
<evidence type="ECO:0000305" key="3"/>
<organism>
    <name type="scientific">Geotrichum candidum</name>
    <name type="common">Oospora lactis</name>
    <name type="synonym">Dipodascus geotrichum</name>
    <dbReference type="NCBI Taxonomy" id="1173061"/>
    <lineage>
        <taxon>Eukaryota</taxon>
        <taxon>Fungi</taxon>
        <taxon>Dikarya</taxon>
        <taxon>Ascomycota</taxon>
        <taxon>Saccharomycotina</taxon>
        <taxon>Dipodascomycetes</taxon>
        <taxon>Dipodascales</taxon>
        <taxon>Dipodascaceae</taxon>
        <taxon>Geotrichum</taxon>
    </lineage>
</organism>
<comment type="function">
    <text>Tubulin is the major constituent of microtubules, a cylinder consisting of laterally associated linear protofilaments composed of alpha- and beta-tubulin heterodimers. Microtubules grow by the addition of GTP-tubulin dimers to the microtubule end, where a stabilizing cap forms. Below the cap, tubulin dimers are in GDP-bound state, owing to GTPase activity of alpha-tubulin.</text>
</comment>
<comment type="cofactor">
    <cofactor evidence="1">
        <name>Mg(2+)</name>
        <dbReference type="ChEBI" id="CHEBI:18420"/>
    </cofactor>
</comment>
<comment type="subunit">
    <text>Dimer of alpha and beta chains. A typical microtubule is a hollow water-filled tube with an outer diameter of 25 nm and an inner diameter of 15 nM. Alpha-beta heterodimers associate head-to-tail to form protofilaments running lengthwise along the microtubule wall with the beta-tubulin subunit facing the microtubule plus end conferring a structural polarity. Microtubules usually have 13 protofilaments but different protofilament numbers can be found in some organisms and specialized cells.</text>
</comment>
<comment type="subcellular location">
    <subcellularLocation>
        <location>Cytoplasm</location>
        <location>Cytoskeleton</location>
    </subcellularLocation>
</comment>
<comment type="similarity">
    <text evidence="3">Belongs to the tubulin family.</text>
</comment>
<keyword id="KW-0963">Cytoplasm</keyword>
<keyword id="KW-0206">Cytoskeleton</keyword>
<keyword id="KW-0342">GTP-binding</keyword>
<keyword id="KW-0460">Magnesium</keyword>
<keyword id="KW-0479">Metal-binding</keyword>
<keyword id="KW-0493">Microtubule</keyword>
<keyword id="KW-0547">Nucleotide-binding</keyword>
<sequence length="447" mass="49866">MREIIHVSAGQCGNQIGAAFWETISGEHGINPSAIYEGTDPLQLERLSVYYNEAGNGKYVPRAVLVDLEPGVMDAVRSGTYGNLFRPDNFIFGQSGAGNNWAKGHYTEGAELVDSVLDIVRREAENSDSLQGFQISHSLGGGTGSGMGTLLISKIREEYPDRMMATFSVVPSPKVSDTIVEPYNATLSVHQLIENADETFCIDNEALYDICQHTLKLKQPTHADLNQLVSGVMSGITTCLRFPGQLNSDLRKLAVNLVPFPRLHFFMVGYAPLSAPGQQSFRSLTVPELTQQLFDSKNMMAASDPKRGRYLTVAAFFRGKVSIKEVEDQMRSVQERNSAYFVEWIPNNVQTAICSVPPKDVKMSATFIANSTSIQELFKRVGDQFSAMFRRKAFLHWYTNEGMDITEFAEAESNMNDLVSEYQQYQNATVDDEDMEYEDELPLEDEM</sequence>
<proteinExistence type="inferred from homology"/>
<dbReference type="EMBL" id="S69624">
    <property type="protein sequence ID" value="AAB20556.2"/>
    <property type="molecule type" value="Genomic_DNA"/>
</dbReference>
<dbReference type="PIR" id="S18596">
    <property type="entry name" value="S18596"/>
</dbReference>
<dbReference type="SMR" id="P32924"/>
<dbReference type="GO" id="GO:0005737">
    <property type="term" value="C:cytoplasm"/>
    <property type="evidence" value="ECO:0007669"/>
    <property type="project" value="UniProtKB-KW"/>
</dbReference>
<dbReference type="GO" id="GO:0005874">
    <property type="term" value="C:microtubule"/>
    <property type="evidence" value="ECO:0007669"/>
    <property type="project" value="UniProtKB-KW"/>
</dbReference>
<dbReference type="GO" id="GO:0005525">
    <property type="term" value="F:GTP binding"/>
    <property type="evidence" value="ECO:0007669"/>
    <property type="project" value="UniProtKB-KW"/>
</dbReference>
<dbReference type="GO" id="GO:0003924">
    <property type="term" value="F:GTPase activity"/>
    <property type="evidence" value="ECO:0007669"/>
    <property type="project" value="InterPro"/>
</dbReference>
<dbReference type="GO" id="GO:0046872">
    <property type="term" value="F:metal ion binding"/>
    <property type="evidence" value="ECO:0007669"/>
    <property type="project" value="UniProtKB-KW"/>
</dbReference>
<dbReference type="GO" id="GO:0005200">
    <property type="term" value="F:structural constituent of cytoskeleton"/>
    <property type="evidence" value="ECO:0007669"/>
    <property type="project" value="InterPro"/>
</dbReference>
<dbReference type="GO" id="GO:0007017">
    <property type="term" value="P:microtubule-based process"/>
    <property type="evidence" value="ECO:0007669"/>
    <property type="project" value="InterPro"/>
</dbReference>
<dbReference type="CDD" id="cd02187">
    <property type="entry name" value="beta_tubulin"/>
    <property type="match status" value="1"/>
</dbReference>
<dbReference type="FunFam" id="1.10.287.600:FF:000006">
    <property type="entry name" value="Tubulin beta chain"/>
    <property type="match status" value="1"/>
</dbReference>
<dbReference type="FunFam" id="3.30.1330.20:FF:000002">
    <property type="entry name" value="Tubulin beta chain"/>
    <property type="match status" value="1"/>
</dbReference>
<dbReference type="FunFam" id="3.40.50.1440:FF:000009">
    <property type="entry name" value="Tubulin beta chain"/>
    <property type="match status" value="1"/>
</dbReference>
<dbReference type="Gene3D" id="1.10.287.600">
    <property type="entry name" value="Helix hairpin bin"/>
    <property type="match status" value="1"/>
</dbReference>
<dbReference type="Gene3D" id="3.30.1330.20">
    <property type="entry name" value="Tubulin/FtsZ, C-terminal domain"/>
    <property type="match status" value="1"/>
</dbReference>
<dbReference type="Gene3D" id="3.40.50.1440">
    <property type="entry name" value="Tubulin/FtsZ, GTPase domain"/>
    <property type="match status" value="1"/>
</dbReference>
<dbReference type="InterPro" id="IPR013838">
    <property type="entry name" value="Beta-tubulin_BS"/>
</dbReference>
<dbReference type="InterPro" id="IPR002453">
    <property type="entry name" value="Beta_tubulin"/>
</dbReference>
<dbReference type="InterPro" id="IPR008280">
    <property type="entry name" value="Tub_FtsZ_C"/>
</dbReference>
<dbReference type="InterPro" id="IPR000217">
    <property type="entry name" value="Tubulin"/>
</dbReference>
<dbReference type="InterPro" id="IPR037103">
    <property type="entry name" value="Tubulin/FtsZ-like_C"/>
</dbReference>
<dbReference type="InterPro" id="IPR018316">
    <property type="entry name" value="Tubulin/FtsZ_2-layer-sand-dom"/>
</dbReference>
<dbReference type="InterPro" id="IPR036525">
    <property type="entry name" value="Tubulin/FtsZ_GTPase_sf"/>
</dbReference>
<dbReference type="InterPro" id="IPR023123">
    <property type="entry name" value="Tubulin_C"/>
</dbReference>
<dbReference type="InterPro" id="IPR017975">
    <property type="entry name" value="Tubulin_CS"/>
</dbReference>
<dbReference type="InterPro" id="IPR003008">
    <property type="entry name" value="Tubulin_FtsZ_GTPase"/>
</dbReference>
<dbReference type="PANTHER" id="PTHR11588">
    <property type="entry name" value="TUBULIN"/>
    <property type="match status" value="1"/>
</dbReference>
<dbReference type="Pfam" id="PF00091">
    <property type="entry name" value="Tubulin"/>
    <property type="match status" value="1"/>
</dbReference>
<dbReference type="Pfam" id="PF03953">
    <property type="entry name" value="Tubulin_C"/>
    <property type="match status" value="1"/>
</dbReference>
<dbReference type="PRINTS" id="PR01163">
    <property type="entry name" value="BETATUBULIN"/>
</dbReference>
<dbReference type="PRINTS" id="PR01161">
    <property type="entry name" value="TUBULIN"/>
</dbReference>
<dbReference type="SMART" id="SM00864">
    <property type="entry name" value="Tubulin"/>
    <property type="match status" value="1"/>
</dbReference>
<dbReference type="SMART" id="SM00865">
    <property type="entry name" value="Tubulin_C"/>
    <property type="match status" value="1"/>
</dbReference>
<dbReference type="SUPFAM" id="SSF55307">
    <property type="entry name" value="Tubulin C-terminal domain-like"/>
    <property type="match status" value="1"/>
</dbReference>
<dbReference type="SUPFAM" id="SSF52490">
    <property type="entry name" value="Tubulin nucleotide-binding domain-like"/>
    <property type="match status" value="1"/>
</dbReference>
<dbReference type="PROSITE" id="PS00227">
    <property type="entry name" value="TUBULIN"/>
    <property type="match status" value="1"/>
</dbReference>
<dbReference type="PROSITE" id="PS00228">
    <property type="entry name" value="TUBULIN_B_AUTOREG"/>
    <property type="match status" value="1"/>
</dbReference>
<feature type="chain" id="PRO_0000048416" description="Tubulin beta-1 chain">
    <location>
        <begin position="1"/>
        <end position="447"/>
    </location>
</feature>
<feature type="binding site" evidence="2">
    <location>
        <position position="11"/>
    </location>
    <ligand>
        <name>GTP</name>
        <dbReference type="ChEBI" id="CHEBI:37565"/>
    </ligand>
</feature>
<feature type="binding site" evidence="1">
    <location>
        <position position="69"/>
    </location>
    <ligand>
        <name>GTP</name>
        <dbReference type="ChEBI" id="CHEBI:37565"/>
    </ligand>
</feature>
<feature type="binding site" evidence="1">
    <location>
        <position position="69"/>
    </location>
    <ligand>
        <name>Mg(2+)</name>
        <dbReference type="ChEBI" id="CHEBI:18420"/>
    </ligand>
</feature>
<feature type="binding site" evidence="2">
    <location>
        <position position="138"/>
    </location>
    <ligand>
        <name>GTP</name>
        <dbReference type="ChEBI" id="CHEBI:37565"/>
    </ligand>
</feature>
<feature type="binding site" evidence="2">
    <location>
        <position position="142"/>
    </location>
    <ligand>
        <name>GTP</name>
        <dbReference type="ChEBI" id="CHEBI:37565"/>
    </ligand>
</feature>
<feature type="binding site" evidence="2">
    <location>
        <position position="143"/>
    </location>
    <ligand>
        <name>GTP</name>
        <dbReference type="ChEBI" id="CHEBI:37565"/>
    </ligand>
</feature>
<feature type="binding site" evidence="2">
    <location>
        <position position="144"/>
    </location>
    <ligand>
        <name>GTP</name>
        <dbReference type="ChEBI" id="CHEBI:37565"/>
    </ligand>
</feature>
<feature type="binding site" evidence="2">
    <location>
        <position position="204"/>
    </location>
    <ligand>
        <name>GTP</name>
        <dbReference type="ChEBI" id="CHEBI:37565"/>
    </ligand>
</feature>
<feature type="binding site" evidence="2">
    <location>
        <position position="226"/>
    </location>
    <ligand>
        <name>GTP</name>
        <dbReference type="ChEBI" id="CHEBI:37565"/>
    </ligand>
</feature>
<reference key="1">
    <citation type="journal article" date="1991" name="Mol. Gen. Genet.">
        <title>Characterization of two beta-tubulin genes from Geotrichum candidum.</title>
        <authorList>
            <person name="Gold S.E."/>
            <person name="Casale W.L."/>
            <person name="Keen N.T."/>
        </authorList>
    </citation>
    <scope>NUCLEOTIDE SEQUENCE [GENOMIC DNA]</scope>
</reference>
<name>TBB1_GEOCN</name>
<protein>
    <recommendedName>
        <fullName>Tubulin beta-1 chain</fullName>
    </recommendedName>
    <alternativeName>
        <fullName>Beta-1-tubulin</fullName>
    </alternativeName>
</protein>